<dbReference type="EMBL" id="AF025840">
    <property type="protein sequence ID" value="AAC51920.1"/>
    <property type="molecule type" value="mRNA"/>
</dbReference>
<dbReference type="EMBL" id="AF036899">
    <property type="protein sequence ID" value="AAC39610.1"/>
    <property type="molecule type" value="mRNA"/>
</dbReference>
<dbReference type="EMBL" id="AF387034">
    <property type="protein sequence ID" value="AAK72254.1"/>
    <property type="molecule type" value="Genomic_DNA"/>
</dbReference>
<dbReference type="EMBL" id="AF387021">
    <property type="protein sequence ID" value="AAK72254.1"/>
    <property type="status" value="JOINED"/>
    <property type="molecule type" value="Genomic_DNA"/>
</dbReference>
<dbReference type="EMBL" id="AF387022">
    <property type="protein sequence ID" value="AAK72254.1"/>
    <property type="status" value="JOINED"/>
    <property type="molecule type" value="Genomic_DNA"/>
</dbReference>
<dbReference type="EMBL" id="AF387023">
    <property type="protein sequence ID" value="AAK72254.1"/>
    <property type="status" value="JOINED"/>
    <property type="molecule type" value="Genomic_DNA"/>
</dbReference>
<dbReference type="EMBL" id="AF387024">
    <property type="protein sequence ID" value="AAK72254.1"/>
    <property type="status" value="JOINED"/>
    <property type="molecule type" value="Genomic_DNA"/>
</dbReference>
<dbReference type="EMBL" id="AF387025">
    <property type="protein sequence ID" value="AAK72254.1"/>
    <property type="status" value="JOINED"/>
    <property type="molecule type" value="Genomic_DNA"/>
</dbReference>
<dbReference type="EMBL" id="AF387026">
    <property type="protein sequence ID" value="AAK72254.1"/>
    <property type="status" value="JOINED"/>
    <property type="molecule type" value="Genomic_DNA"/>
</dbReference>
<dbReference type="EMBL" id="AF387027">
    <property type="protein sequence ID" value="AAK72254.1"/>
    <property type="status" value="JOINED"/>
    <property type="molecule type" value="Genomic_DNA"/>
</dbReference>
<dbReference type="EMBL" id="AF387028">
    <property type="protein sequence ID" value="AAK72254.1"/>
    <property type="status" value="JOINED"/>
    <property type="molecule type" value="Genomic_DNA"/>
</dbReference>
<dbReference type="EMBL" id="AF387029">
    <property type="protein sequence ID" value="AAK72254.1"/>
    <property type="status" value="JOINED"/>
    <property type="molecule type" value="Genomic_DNA"/>
</dbReference>
<dbReference type="EMBL" id="AF387030">
    <property type="protein sequence ID" value="AAK72254.1"/>
    <property type="status" value="JOINED"/>
    <property type="molecule type" value="Genomic_DNA"/>
</dbReference>
<dbReference type="EMBL" id="AF387031">
    <property type="protein sequence ID" value="AAK72254.1"/>
    <property type="status" value="JOINED"/>
    <property type="molecule type" value="Genomic_DNA"/>
</dbReference>
<dbReference type="EMBL" id="AF387032">
    <property type="protein sequence ID" value="AAK72254.1"/>
    <property type="status" value="JOINED"/>
    <property type="molecule type" value="Genomic_DNA"/>
</dbReference>
<dbReference type="EMBL" id="AF387033">
    <property type="protein sequence ID" value="AAK72254.1"/>
    <property type="status" value="JOINED"/>
    <property type="molecule type" value="Genomic_DNA"/>
</dbReference>
<dbReference type="EMBL" id="EF506887">
    <property type="protein sequence ID" value="ABO43040.1"/>
    <property type="molecule type" value="Genomic_DNA"/>
</dbReference>
<dbReference type="EMBL" id="AK293163">
    <property type="protein sequence ID" value="BAG56707.1"/>
    <property type="molecule type" value="mRNA"/>
</dbReference>
<dbReference type="EMBL" id="AL139099">
    <property type="status" value="NOT_ANNOTATED_CDS"/>
    <property type="molecule type" value="Genomic_DNA"/>
</dbReference>
<dbReference type="EMBL" id="AL591767">
    <property type="status" value="NOT_ANNOTATED_CDS"/>
    <property type="molecule type" value="Genomic_DNA"/>
</dbReference>
<dbReference type="EMBL" id="BC112962">
    <property type="protein sequence ID" value="AAI12963.1"/>
    <property type="molecule type" value="mRNA"/>
</dbReference>
<dbReference type="EMBL" id="BC126218">
    <property type="protein sequence ID" value="AAI26219.1"/>
    <property type="molecule type" value="mRNA"/>
</dbReference>
<dbReference type="EMBL" id="BC126220">
    <property type="protein sequence ID" value="AAI26221.1"/>
    <property type="molecule type" value="mRNA"/>
</dbReference>
<dbReference type="CCDS" id="CCDS32073.1">
    <molecule id="P56282-1"/>
</dbReference>
<dbReference type="CCDS" id="CCDS55914.1">
    <molecule id="P56282-2"/>
</dbReference>
<dbReference type="CCDS" id="CCDS55915.1">
    <molecule id="P56282-3"/>
</dbReference>
<dbReference type="RefSeq" id="NP_001184259.1">
    <molecule id="P56282-2"/>
    <property type="nucleotide sequence ID" value="NM_001197330.2"/>
</dbReference>
<dbReference type="RefSeq" id="NP_001184260.1">
    <molecule id="P56282-3"/>
    <property type="nucleotide sequence ID" value="NM_001197331.3"/>
</dbReference>
<dbReference type="RefSeq" id="NP_001335313.1">
    <property type="nucleotide sequence ID" value="NM_001348384.1"/>
</dbReference>
<dbReference type="RefSeq" id="NP_002683.2">
    <molecule id="P56282-1"/>
    <property type="nucleotide sequence ID" value="NM_002692.3"/>
</dbReference>
<dbReference type="PDB" id="2V6Z">
    <property type="method" value="NMR"/>
    <property type="chains" value="M=1-73"/>
</dbReference>
<dbReference type="PDB" id="5VBN">
    <property type="method" value="X-ray"/>
    <property type="resolution" value="2.35 A"/>
    <property type="chains" value="A/E=1-527"/>
</dbReference>
<dbReference type="PDB" id="7PFO">
    <property type="method" value="EM"/>
    <property type="resolution" value="3.20 A"/>
    <property type="chains" value="A=1-527"/>
</dbReference>
<dbReference type="PDB" id="7PLO">
    <property type="method" value="EM"/>
    <property type="resolution" value="2.80 A"/>
    <property type="chains" value="A=1-527"/>
</dbReference>
<dbReference type="PDBsum" id="2V6Z"/>
<dbReference type="PDBsum" id="5VBN"/>
<dbReference type="PDBsum" id="7PFO"/>
<dbReference type="PDBsum" id="7PLO"/>
<dbReference type="BMRB" id="P56282"/>
<dbReference type="EMDB" id="EMD-13375"/>
<dbReference type="EMDB" id="EMD-13494"/>
<dbReference type="SMR" id="P56282"/>
<dbReference type="BioGRID" id="111423">
    <property type="interactions" value="69"/>
</dbReference>
<dbReference type="ComplexPortal" id="CPX-2108">
    <property type="entry name" value="DNA polymerase epsilon complex"/>
</dbReference>
<dbReference type="CORUM" id="P56282"/>
<dbReference type="FunCoup" id="P56282">
    <property type="interactions" value="2072"/>
</dbReference>
<dbReference type="IntAct" id="P56282">
    <property type="interactions" value="37"/>
</dbReference>
<dbReference type="STRING" id="9606.ENSP00000216367"/>
<dbReference type="ChEMBL" id="CHEMBL2363042"/>
<dbReference type="DrugBank" id="DB12151">
    <property type="generic name" value="Brincidofovir"/>
</dbReference>
<dbReference type="DrugBank" id="DB00242">
    <property type="generic name" value="Cladribine"/>
</dbReference>
<dbReference type="GlyGen" id="P56282">
    <property type="glycosylation" value="1 site, 1 O-linked glycan (1 site)"/>
</dbReference>
<dbReference type="iPTMnet" id="P56282"/>
<dbReference type="PhosphoSitePlus" id="P56282"/>
<dbReference type="BioMuta" id="POLE2"/>
<dbReference type="DMDM" id="3915676"/>
<dbReference type="jPOST" id="P56282"/>
<dbReference type="MassIVE" id="P56282"/>
<dbReference type="PaxDb" id="9606-ENSP00000216367"/>
<dbReference type="PeptideAtlas" id="P56282"/>
<dbReference type="ProteomicsDB" id="56911">
    <molecule id="P56282-1"/>
</dbReference>
<dbReference type="ProteomicsDB" id="56912">
    <molecule id="P56282-2"/>
</dbReference>
<dbReference type="ProteomicsDB" id="56913">
    <molecule id="P56282-3"/>
</dbReference>
<dbReference type="Pumba" id="P56282"/>
<dbReference type="Antibodypedia" id="23530">
    <property type="antibodies" value="130 antibodies from 23 providers"/>
</dbReference>
<dbReference type="DNASU" id="5427"/>
<dbReference type="Ensembl" id="ENST00000216367.10">
    <molecule id="P56282-1"/>
    <property type="protein sequence ID" value="ENSP00000216367.5"/>
    <property type="gene ID" value="ENSG00000100479.14"/>
</dbReference>
<dbReference type="Ensembl" id="ENST00000539565.6">
    <molecule id="P56282-2"/>
    <property type="protein sequence ID" value="ENSP00000446313.2"/>
    <property type="gene ID" value="ENSG00000100479.14"/>
</dbReference>
<dbReference type="Ensembl" id="ENST00000554396.6">
    <molecule id="P56282-3"/>
    <property type="protein sequence ID" value="ENSP00000451621.1"/>
    <property type="gene ID" value="ENSG00000100479.14"/>
</dbReference>
<dbReference type="GeneID" id="5427"/>
<dbReference type="KEGG" id="hsa:5427"/>
<dbReference type="MANE-Select" id="ENST00000216367.10">
    <property type="protein sequence ID" value="ENSP00000216367.5"/>
    <property type="RefSeq nucleotide sequence ID" value="NM_002692.4"/>
    <property type="RefSeq protein sequence ID" value="NP_002683.2"/>
</dbReference>
<dbReference type="UCSC" id="uc001wwu.4">
    <molecule id="P56282-1"/>
    <property type="organism name" value="human"/>
</dbReference>
<dbReference type="AGR" id="HGNC:9178"/>
<dbReference type="CTD" id="5427"/>
<dbReference type="DisGeNET" id="5427"/>
<dbReference type="GeneCards" id="POLE2"/>
<dbReference type="HGNC" id="HGNC:9178">
    <property type="gene designation" value="POLE2"/>
</dbReference>
<dbReference type="HPA" id="ENSG00000100479">
    <property type="expression patterns" value="Tissue enhanced (bone)"/>
</dbReference>
<dbReference type="MalaCards" id="POLE2"/>
<dbReference type="MIM" id="602670">
    <property type="type" value="gene"/>
</dbReference>
<dbReference type="neXtProt" id="NX_P56282"/>
<dbReference type="OpenTargets" id="ENSG00000100479"/>
<dbReference type="PharmGKB" id="PA278"/>
<dbReference type="VEuPathDB" id="HostDB:ENSG00000100479"/>
<dbReference type="eggNOG" id="KOG3818">
    <property type="taxonomic scope" value="Eukaryota"/>
</dbReference>
<dbReference type="GeneTree" id="ENSGT00390000012435"/>
<dbReference type="HOGENOM" id="CLU_010628_2_0_1"/>
<dbReference type="InParanoid" id="P56282"/>
<dbReference type="OMA" id="FFCEGCF"/>
<dbReference type="OrthoDB" id="10254730at2759"/>
<dbReference type="PAN-GO" id="P56282">
    <property type="GO annotations" value="3 GO annotations based on evolutionary models"/>
</dbReference>
<dbReference type="PhylomeDB" id="P56282"/>
<dbReference type="TreeFam" id="TF103007"/>
<dbReference type="BRENDA" id="2.7.7.7">
    <property type="organism ID" value="2681"/>
</dbReference>
<dbReference type="PathwayCommons" id="P56282"/>
<dbReference type="Reactome" id="R-HSA-110314">
    <property type="pathway name" value="Recognition of DNA damage by PCNA-containing replication complex"/>
</dbReference>
<dbReference type="Reactome" id="R-HSA-5651801">
    <property type="pathway name" value="PCNA-Dependent Long Patch Base Excision Repair"/>
</dbReference>
<dbReference type="Reactome" id="R-HSA-5656169">
    <property type="pathway name" value="Termination of translesion DNA synthesis"/>
</dbReference>
<dbReference type="Reactome" id="R-HSA-5685942">
    <property type="pathway name" value="HDR through Homologous Recombination (HRR)"/>
</dbReference>
<dbReference type="Reactome" id="R-HSA-5696397">
    <property type="pathway name" value="Gap-filling DNA repair synthesis and ligation in GG-NER"/>
</dbReference>
<dbReference type="Reactome" id="R-HSA-5696400">
    <property type="pathway name" value="Dual Incision in GG-NER"/>
</dbReference>
<dbReference type="Reactome" id="R-HSA-6782135">
    <property type="pathway name" value="Dual incision in TC-NER"/>
</dbReference>
<dbReference type="Reactome" id="R-HSA-6782210">
    <property type="pathway name" value="Gap-filling DNA repair synthesis and ligation in TC-NER"/>
</dbReference>
<dbReference type="Reactome" id="R-HSA-68952">
    <property type="pathway name" value="DNA replication initiation"/>
</dbReference>
<dbReference type="Reactome" id="R-HSA-68962">
    <property type="pathway name" value="Activation of the pre-replicative complex"/>
</dbReference>
<dbReference type="SignaLink" id="P56282"/>
<dbReference type="SIGNOR" id="P56282"/>
<dbReference type="BioGRID-ORCS" id="5427">
    <property type="hits" value="802 hits in 1153 CRISPR screens"/>
</dbReference>
<dbReference type="ChiTaRS" id="POLE2">
    <property type="organism name" value="human"/>
</dbReference>
<dbReference type="EvolutionaryTrace" id="P56282"/>
<dbReference type="GeneWiki" id="POLE2"/>
<dbReference type="GenomeRNAi" id="5427"/>
<dbReference type="Pharos" id="P56282">
    <property type="development level" value="Tbio"/>
</dbReference>
<dbReference type="PRO" id="PR:P56282"/>
<dbReference type="Proteomes" id="UP000005640">
    <property type="component" value="Chromosome 14"/>
</dbReference>
<dbReference type="RNAct" id="P56282">
    <property type="molecule type" value="protein"/>
</dbReference>
<dbReference type="Bgee" id="ENSG00000100479">
    <property type="expression patterns" value="Expressed in primordial germ cell in gonad and 120 other cell types or tissues"/>
</dbReference>
<dbReference type="ExpressionAtlas" id="P56282">
    <property type="expression patterns" value="baseline and differential"/>
</dbReference>
<dbReference type="GO" id="GO:0008622">
    <property type="term" value="C:epsilon DNA polymerase complex"/>
    <property type="evidence" value="ECO:0000314"/>
    <property type="project" value="UniProtKB"/>
</dbReference>
<dbReference type="GO" id="GO:0043231">
    <property type="term" value="C:intracellular membrane-bounded organelle"/>
    <property type="evidence" value="ECO:0000314"/>
    <property type="project" value="HPA"/>
</dbReference>
<dbReference type="GO" id="GO:0016604">
    <property type="term" value="C:nuclear body"/>
    <property type="evidence" value="ECO:0000314"/>
    <property type="project" value="HPA"/>
</dbReference>
<dbReference type="GO" id="GO:0005654">
    <property type="term" value="C:nucleoplasm"/>
    <property type="evidence" value="ECO:0000314"/>
    <property type="project" value="HPA"/>
</dbReference>
<dbReference type="GO" id="GO:0003677">
    <property type="term" value="F:DNA binding"/>
    <property type="evidence" value="ECO:0007669"/>
    <property type="project" value="UniProtKB-KW"/>
</dbReference>
<dbReference type="GO" id="GO:0003887">
    <property type="term" value="F:DNA-directed DNA polymerase activity"/>
    <property type="evidence" value="ECO:0000304"/>
    <property type="project" value="ProtInc"/>
</dbReference>
<dbReference type="GO" id="GO:0006281">
    <property type="term" value="P:DNA repair"/>
    <property type="evidence" value="ECO:0000304"/>
    <property type="project" value="ProtInc"/>
</dbReference>
<dbReference type="GO" id="GO:0006260">
    <property type="term" value="P:DNA replication"/>
    <property type="evidence" value="ECO:0000304"/>
    <property type="project" value="ProtInc"/>
</dbReference>
<dbReference type="GO" id="GO:0006261">
    <property type="term" value="P:DNA-templated DNA replication"/>
    <property type="evidence" value="ECO:0000314"/>
    <property type="project" value="ComplexPortal"/>
</dbReference>
<dbReference type="GO" id="GO:0042276">
    <property type="term" value="P:error-prone translesion synthesis"/>
    <property type="evidence" value="ECO:0000318"/>
    <property type="project" value="GO_Central"/>
</dbReference>
<dbReference type="FunFam" id="1.10.8.60:FF:000053">
    <property type="entry name" value="DNA polymerase epsilon subunit"/>
    <property type="match status" value="1"/>
</dbReference>
<dbReference type="FunFam" id="3.60.21.50:FF:000007">
    <property type="entry name" value="DNA polymerase epsilon subunit"/>
    <property type="match status" value="1"/>
</dbReference>
<dbReference type="Gene3D" id="1.10.8.60">
    <property type="match status" value="1"/>
</dbReference>
<dbReference type="Gene3D" id="3.60.21.60">
    <property type="match status" value="1"/>
</dbReference>
<dbReference type="InterPro" id="IPR007185">
    <property type="entry name" value="DNA_pol_a/d/e_bsu"/>
</dbReference>
<dbReference type="InterPro" id="IPR024639">
    <property type="entry name" value="DNA_pol_e_bsu_N"/>
</dbReference>
<dbReference type="InterPro" id="IPR016266">
    <property type="entry name" value="POLE2"/>
</dbReference>
<dbReference type="PANTHER" id="PTHR12708:SF0">
    <property type="entry name" value="DNA POLYMERASE EPSILON SUBUNIT 2"/>
    <property type="match status" value="1"/>
</dbReference>
<dbReference type="PANTHER" id="PTHR12708">
    <property type="entry name" value="DNA POLYMERASE EPSILON SUBUNIT B"/>
    <property type="match status" value="1"/>
</dbReference>
<dbReference type="Pfam" id="PF04042">
    <property type="entry name" value="DNA_pol_E_B"/>
    <property type="match status" value="1"/>
</dbReference>
<dbReference type="Pfam" id="PF12213">
    <property type="entry name" value="Dpoe2NT"/>
    <property type="match status" value="1"/>
</dbReference>
<dbReference type="PIRSF" id="PIRSF000799">
    <property type="entry name" value="DNA_pol_eps_2"/>
    <property type="match status" value="1"/>
</dbReference>
<proteinExistence type="evidence at protein level"/>
<accession>P56282</accession>
<accession>A0AV55</accession>
<accession>A4FU92</accession>
<accession>A4LBB7</accession>
<accession>A6NH58</accession>
<accession>B4DDE6</accession>
<accession>O43560</accession>
<comment type="function">
    <text evidence="1 2">Accessory component of the DNA polymerase epsilon complex (PubMed:10801849). Participates in DNA repair and in chromosomal DNA replication (By similarity).</text>
</comment>
<comment type="subunit">
    <text evidence="2">Component of the DNA polymerase epsilon complex consisting of four subunits: the catalytic subunit POLE and the accessory subunits POLE2, POLE3 and POLE4.</text>
</comment>
<comment type="interaction">
    <interactant intactId="EBI-713847">
        <id>P56282</id>
    </interactant>
    <interactant intactId="EBI-996560">
        <id>P52594</id>
        <label>AGFG1</label>
    </interactant>
    <organismsDiffer>false</organismsDiffer>
    <experiments>3</experiments>
</comment>
<comment type="interaction">
    <interactant intactId="EBI-713847">
        <id>P56282</id>
    </interactant>
    <interactant intactId="EBI-3918831">
        <id>Q9HCS2</id>
        <label>CYP4F12</label>
    </interactant>
    <organismsDiffer>false</organismsDiffer>
    <experiments>2</experiments>
</comment>
<comment type="interaction">
    <interactant intactId="EBI-713847">
        <id>P56282</id>
    </interactant>
    <interactant intactId="EBI-371823">
        <id>Q9NPD3</id>
        <label>EXOSC4</label>
    </interactant>
    <organismsDiffer>false</organismsDiffer>
    <experiments>5</experiments>
</comment>
<comment type="interaction">
    <interactant intactId="EBI-713847">
        <id>P56282</id>
    </interactant>
    <interactant intactId="EBI-10215395">
        <id>V9HWB8</id>
        <label>HEL-S-30</label>
    </interactant>
    <organismsDiffer>false</organismsDiffer>
    <experiments>3</experiments>
</comment>
<comment type="interaction">
    <interactant intactId="EBI-713847">
        <id>P56282</id>
    </interactant>
    <interactant intactId="EBI-1004115">
        <id>Q15691</id>
        <label>MAPRE1</label>
    </interactant>
    <organismsDiffer>false</organismsDiffer>
    <experiments>6</experiments>
</comment>
<comment type="interaction">
    <interactant intactId="EBI-713847">
        <id>P56282</id>
    </interactant>
    <interactant intactId="EBI-348526">
        <id>Q07864</id>
        <label>POLE</label>
    </interactant>
    <organismsDiffer>false</organismsDiffer>
    <experiments>11</experiments>
</comment>
<comment type="interaction">
    <interactant intactId="EBI-713847">
        <id>P56282</id>
    </interactant>
    <interactant intactId="EBI-307352">
        <id>Q04864</id>
        <label>REL</label>
    </interactant>
    <organismsDiffer>false</organismsDiffer>
    <experiments>3</experiments>
</comment>
<comment type="interaction">
    <interactant intactId="EBI-713847">
        <id>P56282</id>
    </interactant>
    <interactant intactId="EBI-741237">
        <id>O60504</id>
        <label>SORBS3</label>
    </interactant>
    <organismsDiffer>false</organismsDiffer>
    <experiments>3</experiments>
</comment>
<comment type="interaction">
    <interactant intactId="EBI-713847">
        <id>P56282</id>
    </interactant>
    <interactant intactId="EBI-10191361">
        <id>Q96SF7</id>
        <label>TBX15</label>
    </interactant>
    <organismsDiffer>false</organismsDiffer>
    <experiments>3</experiments>
</comment>
<comment type="interaction">
    <interactant intactId="EBI-713847">
        <id>P56282</id>
    </interactant>
    <interactant intactId="EBI-719493">
        <id>P14373</id>
        <label>TRIM27</label>
    </interactant>
    <organismsDiffer>false</organismsDiffer>
    <experiments>7</experiments>
</comment>
<comment type="interaction">
    <interactant intactId="EBI-713847">
        <id>P56282</id>
    </interactant>
    <interactant intactId="EBI-947187">
        <id>Q9UHD9</id>
        <label>UBQLN2</label>
    </interactant>
    <organismsDiffer>false</organismsDiffer>
    <experiments>3</experiments>
</comment>
<comment type="interaction">
    <interactant intactId="EBI-713847">
        <id>P56282</id>
    </interactant>
    <interactant intactId="EBI-740037">
        <id>O96006</id>
        <label>ZBED1</label>
    </interactant>
    <organismsDiffer>false</organismsDiffer>
    <experiments>3</experiments>
</comment>
<comment type="interaction">
    <interactant intactId="EBI-713847">
        <id>P56282</id>
    </interactant>
    <interactant intactId="EBI-4395669">
        <id>Q6ZNG0</id>
        <label>ZNF620</label>
    </interactant>
    <organismsDiffer>false</organismsDiffer>
    <experiments>3</experiments>
</comment>
<comment type="subcellular location">
    <subcellularLocation>
        <location>Nucleus</location>
    </subcellularLocation>
</comment>
<comment type="alternative products">
    <event type="alternative splicing"/>
    <isoform>
        <id>P56282-1</id>
        <name>1</name>
        <sequence type="displayed"/>
    </isoform>
    <isoform>
        <id>P56282-2</id>
        <name>2</name>
        <sequence type="described" ref="VSP_042551"/>
    </isoform>
    <isoform>
        <id>P56282-3</id>
        <name>3</name>
        <sequence type="described" ref="VSP_043796"/>
    </isoform>
</comment>
<comment type="miscellaneous">
    <text>In eukaryotes there are five DNA polymerases: alpha, beta, gamma, delta, and epsilon which are responsible for different reactions of DNA synthesis.</text>
</comment>
<comment type="similarity">
    <text evidence="6">Belongs to the DNA polymerase epsilon subunit B family.</text>
</comment>
<gene>
    <name evidence="7" type="primary">POLE2</name>
    <name type="synonym">DPE2</name>
</gene>
<sequence length="527" mass="59537">MAPERLRSRALSAFKLRGLLLRGEAIKYLTEALQSISELELEDKLEKIINAVEKQPLSSNMIERSVVEAAVQECSQSVDETIEHVFNIIGAFDIPRFVYNSERKKFLPLLMTNHPAPNLFGTPRDKAEMFRERYTILHQRTHRHELFTPPVIGSHPDESGSKFQLKTIETLLGSTTKIGDAIVLGMITQLKEGKFFLEDPTGTVQLDLSKAQFHSGLYTEACFVLAEGWFEDQVFHVNAFGFPPTEPSSTTRAYYGNINFFGGPSNTSVKTSAKLKQLEEENKDAMFVFLSDVWLDQVEVLEKLRIMFAGYSPAPPTCFILCGNFSSAPYGKNQVQALKDSLKTLADIICEYPDIHQSSRFVFVPGPEDPGFGSILPRPPLAESITNEFRQRVPFSVFTTNPCRIQYCTQEITVFREDLVNKMCRNCVRFPSSNLAIPNHFVKTILSQGHLTPLPLYVCPVYWAYDYALRVYPVPDLLVIADKYDPFTTTNTECLCINPGSFPRSGFSFKVFYPSNKTVEDSKLQGF</sequence>
<keyword id="KW-0002">3D-structure</keyword>
<keyword id="KW-0025">Alternative splicing</keyword>
<keyword id="KW-0235">DNA replication</keyword>
<keyword id="KW-0238">DNA-binding</keyword>
<keyword id="KW-0539">Nucleus</keyword>
<keyword id="KW-1267">Proteomics identification</keyword>
<keyword id="KW-1185">Reference proteome</keyword>
<evidence type="ECO:0000250" key="1">
    <source>
        <dbReference type="UniProtKB" id="P24482"/>
    </source>
</evidence>
<evidence type="ECO:0000269" key="2">
    <source>
    </source>
</evidence>
<evidence type="ECO:0000269" key="3">
    <source ref="4"/>
</evidence>
<evidence type="ECO:0000303" key="4">
    <source>
    </source>
</evidence>
<evidence type="ECO:0000303" key="5">
    <source>
    </source>
</evidence>
<evidence type="ECO:0000305" key="6"/>
<evidence type="ECO:0000312" key="7">
    <source>
        <dbReference type="HGNC" id="HGNC:9178"/>
    </source>
</evidence>
<evidence type="ECO:0007744" key="8">
    <source>
        <dbReference type="PDB" id="7PFO"/>
    </source>
</evidence>
<evidence type="ECO:0007744" key="9">
    <source>
        <dbReference type="PDB" id="7PLO"/>
    </source>
</evidence>
<evidence type="ECO:0007829" key="10">
    <source>
        <dbReference type="PDB" id="2V6Z"/>
    </source>
</evidence>
<evidence type="ECO:0007829" key="11">
    <source>
        <dbReference type="PDB" id="5VBN"/>
    </source>
</evidence>
<organism>
    <name type="scientific">Homo sapiens</name>
    <name type="common">Human</name>
    <dbReference type="NCBI Taxonomy" id="9606"/>
    <lineage>
        <taxon>Eukaryota</taxon>
        <taxon>Metazoa</taxon>
        <taxon>Chordata</taxon>
        <taxon>Craniata</taxon>
        <taxon>Vertebrata</taxon>
        <taxon>Euteleostomi</taxon>
        <taxon>Mammalia</taxon>
        <taxon>Eutheria</taxon>
        <taxon>Euarchontoglires</taxon>
        <taxon>Primates</taxon>
        <taxon>Haplorrhini</taxon>
        <taxon>Catarrhini</taxon>
        <taxon>Hominidae</taxon>
        <taxon>Homo</taxon>
    </lineage>
</organism>
<feature type="chain" id="PRO_0000071562" description="DNA polymerase epsilon subunit 2">
    <location>
        <begin position="1"/>
        <end position="527"/>
    </location>
</feature>
<feature type="splice variant" id="VSP_042551" description="In isoform 2." evidence="4">
    <location>
        <begin position="83"/>
        <end position="108"/>
    </location>
</feature>
<feature type="splice variant" id="VSP_043796" description="In isoform 3." evidence="5">
    <original>GSFPRSGFSFKVFYPSNKTVEDSKLQGF</original>
    <variation>VRM</variation>
    <location>
        <begin position="500"/>
        <end position="527"/>
    </location>
</feature>
<feature type="sequence variant" id="VAR_044379" description="In dbSNP:rs34857719." evidence="3">
    <original>H</original>
    <variation>P</variation>
    <location>
        <position position="84"/>
    </location>
</feature>
<feature type="sequence variant" id="VAR_044380" description="In dbSNP:rs34574266.">
    <original>L</original>
    <variation>V</variation>
    <location>
        <position position="456"/>
    </location>
</feature>
<feature type="sequence variant" id="VAR_044381" description="In dbSNP:rs45515094." evidence="3">
    <original>P</original>
    <variation>L</variation>
    <location>
        <position position="514"/>
    </location>
</feature>
<feature type="sequence conflict" description="In Ref. 1; AAC51920." evidence="6" ref="1">
    <original>L</original>
    <variation>P</variation>
    <location>
        <position position="11"/>
    </location>
</feature>
<feature type="sequence conflict" description="In Ref. 1; AAC51920." evidence="6" ref="1">
    <location>
        <position position="359"/>
    </location>
</feature>
<feature type="helix" evidence="10">
    <location>
        <begin position="3"/>
        <end position="16"/>
    </location>
</feature>
<feature type="helix" evidence="10">
    <location>
        <begin position="23"/>
        <end position="32"/>
    </location>
</feature>
<feature type="turn" evidence="10">
    <location>
        <begin position="33"/>
        <end position="35"/>
    </location>
</feature>
<feature type="turn" evidence="10">
    <location>
        <begin position="38"/>
        <end position="40"/>
    </location>
</feature>
<feature type="helix" evidence="10">
    <location>
        <begin position="41"/>
        <end position="52"/>
    </location>
</feature>
<feature type="strand" evidence="10">
    <location>
        <begin position="58"/>
        <end position="62"/>
    </location>
</feature>
<feature type="helix" evidence="10">
    <location>
        <begin position="64"/>
        <end position="74"/>
    </location>
</feature>
<feature type="strand" evidence="11">
    <location>
        <begin position="86"/>
        <end position="90"/>
    </location>
</feature>
<feature type="helix" evidence="11">
    <location>
        <begin position="91"/>
        <end position="93"/>
    </location>
</feature>
<feature type="strand" evidence="11">
    <location>
        <begin position="97"/>
        <end position="100"/>
    </location>
</feature>
<feature type="turn" evidence="11">
    <location>
        <begin position="101"/>
        <end position="104"/>
    </location>
</feature>
<feature type="strand" evidence="11">
    <location>
        <begin position="105"/>
        <end position="108"/>
    </location>
</feature>
<feature type="helix" evidence="11">
    <location>
        <begin position="109"/>
        <end position="111"/>
    </location>
</feature>
<feature type="helix" evidence="11">
    <location>
        <begin position="123"/>
        <end position="142"/>
    </location>
</feature>
<feature type="helix" evidence="11">
    <location>
        <begin position="168"/>
        <end position="173"/>
    </location>
</feature>
<feature type="strand" evidence="11">
    <location>
        <begin position="178"/>
        <end position="191"/>
    </location>
</feature>
<feature type="strand" evidence="11">
    <location>
        <begin position="194"/>
        <end position="199"/>
    </location>
</feature>
<feature type="strand" evidence="11">
    <location>
        <begin position="202"/>
        <end position="207"/>
    </location>
</feature>
<feature type="strand" evidence="11">
    <location>
        <begin position="223"/>
        <end position="230"/>
    </location>
</feature>
<feature type="strand" evidence="11">
    <location>
        <begin position="232"/>
        <end position="241"/>
    </location>
</feature>
<feature type="helix" evidence="11">
    <location>
        <begin position="248"/>
        <end position="255"/>
    </location>
</feature>
<feature type="helix" evidence="11">
    <location>
        <begin position="269"/>
        <end position="271"/>
    </location>
</feature>
<feature type="helix" evidence="11">
    <location>
        <begin position="273"/>
        <end position="281"/>
    </location>
</feature>
<feature type="strand" evidence="11">
    <location>
        <begin position="287"/>
        <end position="291"/>
    </location>
</feature>
<feature type="helix" evidence="11">
    <location>
        <begin position="298"/>
        <end position="311"/>
    </location>
</feature>
<feature type="strand" evidence="11">
    <location>
        <begin position="317"/>
        <end position="323"/>
    </location>
</feature>
<feature type="helix" evidence="11">
    <location>
        <begin position="334"/>
        <end position="350"/>
    </location>
</feature>
<feature type="helix" evidence="11">
    <location>
        <begin position="353"/>
        <end position="358"/>
    </location>
</feature>
<feature type="strand" evidence="11">
    <location>
        <begin position="360"/>
        <end position="364"/>
    </location>
</feature>
<feature type="turn" evidence="11">
    <location>
        <begin position="370"/>
        <end position="374"/>
    </location>
</feature>
<feature type="strand" evidence="11">
    <location>
        <begin position="375"/>
        <end position="378"/>
    </location>
</feature>
<feature type="helix" evidence="11">
    <location>
        <begin position="383"/>
        <end position="392"/>
    </location>
</feature>
<feature type="strand" evidence="11">
    <location>
        <begin position="396"/>
        <end position="398"/>
    </location>
</feature>
<feature type="strand" evidence="11">
    <location>
        <begin position="401"/>
        <end position="407"/>
    </location>
</feature>
<feature type="strand" evidence="11">
    <location>
        <begin position="410"/>
        <end position="417"/>
    </location>
</feature>
<feature type="helix" evidence="11">
    <location>
        <begin position="419"/>
        <end position="424"/>
    </location>
</feature>
<feature type="strand" evidence="11">
    <location>
        <begin position="427"/>
        <end position="429"/>
    </location>
</feature>
<feature type="helix" evidence="11">
    <location>
        <begin position="437"/>
        <end position="448"/>
    </location>
</feature>
<feature type="turn" evidence="11">
    <location>
        <begin position="456"/>
        <end position="458"/>
    </location>
</feature>
<feature type="helix" evidence="11">
    <location>
        <begin position="463"/>
        <end position="469"/>
    </location>
</feature>
<feature type="strand" evidence="11">
    <location>
        <begin position="476"/>
        <end position="481"/>
    </location>
</feature>
<feature type="strand" evidence="11">
    <location>
        <begin position="487"/>
        <end position="491"/>
    </location>
</feature>
<feature type="strand" evidence="11">
    <location>
        <begin position="494"/>
        <end position="498"/>
    </location>
</feature>
<feature type="helix" evidence="11">
    <location>
        <begin position="502"/>
        <end position="504"/>
    </location>
</feature>
<feature type="strand" evidence="11">
    <location>
        <begin position="507"/>
        <end position="513"/>
    </location>
</feature>
<feature type="turn" evidence="11">
    <location>
        <begin position="514"/>
        <end position="517"/>
    </location>
</feature>
<feature type="strand" evidence="11">
    <location>
        <begin position="518"/>
        <end position="523"/>
    </location>
</feature>
<protein>
    <recommendedName>
        <fullName>DNA polymerase epsilon subunit 2</fullName>
    </recommendedName>
    <alternativeName>
        <fullName>DNA polymerase II subunit 2</fullName>
    </alternativeName>
    <alternativeName>
        <fullName>DNA polymerase epsilon subunit B</fullName>
    </alternativeName>
</protein>
<reference key="1">
    <citation type="journal article" date="1997" name="J. Biol. Chem.">
        <title>Purification, cDNA cloning, and gene mapping of the small subunit of human DNA polymerase epsilon.</title>
        <authorList>
            <person name="Li Y."/>
            <person name="Asahara H."/>
            <person name="Patel V.S."/>
            <person name="Zhou S."/>
            <person name="Linn S."/>
        </authorList>
    </citation>
    <scope>NUCLEOTIDE SEQUENCE [MRNA] (ISOFORM 1)</scope>
</reference>
<reference key="2">
    <citation type="journal article" date="1998" name="Nucleic Acids Res.">
        <title>The small subunits of human and mouse DNA polymerase epsilon are homologous to the second largest subunit of the yeast Saccharomyces cerevisiae DNA polymerase epsilon.</title>
        <authorList>
            <person name="Jokela M."/>
            <person name="Makiniemi M."/>
            <person name="Lehtonen S."/>
            <person name="Szpirer C."/>
            <person name="Hellman U."/>
            <person name="Syvaeoja J.E."/>
        </authorList>
    </citation>
    <scope>NUCLEOTIDE SEQUENCE [MRNA] (ISOFORM 1)</scope>
</reference>
<reference key="3">
    <citation type="journal article" date="2001" name="Nucleic Acids Res.">
        <title>E2F mediates induction of the Sp1-controlled promoter of the human DNA polymerase varepsilon B-subunit gene POLE2.</title>
        <authorList>
            <person name="Huang D."/>
            <person name="Jokela M."/>
            <person name="Tuusa J."/>
            <person name="Skog S."/>
            <person name="Poikonen K."/>
            <person name="Syvaoja J.E."/>
        </authorList>
    </citation>
    <scope>NUCLEOTIDE SEQUENCE [GENOMIC DNA]</scope>
</reference>
<reference key="4">
    <citation type="submission" date="2007-03" db="EMBL/GenBank/DDBJ databases">
        <authorList>
            <consortium name="NIEHS SNPs program"/>
        </authorList>
    </citation>
    <scope>NUCLEOTIDE SEQUENCE [GENOMIC DNA]</scope>
    <scope>VARIANTS PRO-84 AND LEU-514</scope>
</reference>
<reference key="5">
    <citation type="journal article" date="2004" name="Nat. Genet.">
        <title>Complete sequencing and characterization of 21,243 full-length human cDNAs.</title>
        <authorList>
            <person name="Ota T."/>
            <person name="Suzuki Y."/>
            <person name="Nishikawa T."/>
            <person name="Otsuki T."/>
            <person name="Sugiyama T."/>
            <person name="Irie R."/>
            <person name="Wakamatsu A."/>
            <person name="Hayashi K."/>
            <person name="Sato H."/>
            <person name="Nagai K."/>
            <person name="Kimura K."/>
            <person name="Makita H."/>
            <person name="Sekine M."/>
            <person name="Obayashi M."/>
            <person name="Nishi T."/>
            <person name="Shibahara T."/>
            <person name="Tanaka T."/>
            <person name="Ishii S."/>
            <person name="Yamamoto J."/>
            <person name="Saito K."/>
            <person name="Kawai Y."/>
            <person name="Isono Y."/>
            <person name="Nakamura Y."/>
            <person name="Nagahari K."/>
            <person name="Murakami K."/>
            <person name="Yasuda T."/>
            <person name="Iwayanagi T."/>
            <person name="Wagatsuma M."/>
            <person name="Shiratori A."/>
            <person name="Sudo H."/>
            <person name="Hosoiri T."/>
            <person name="Kaku Y."/>
            <person name="Kodaira H."/>
            <person name="Kondo H."/>
            <person name="Sugawara M."/>
            <person name="Takahashi M."/>
            <person name="Kanda K."/>
            <person name="Yokoi T."/>
            <person name="Furuya T."/>
            <person name="Kikkawa E."/>
            <person name="Omura Y."/>
            <person name="Abe K."/>
            <person name="Kamihara K."/>
            <person name="Katsuta N."/>
            <person name="Sato K."/>
            <person name="Tanikawa M."/>
            <person name="Yamazaki M."/>
            <person name="Ninomiya K."/>
            <person name="Ishibashi T."/>
            <person name="Yamashita H."/>
            <person name="Murakawa K."/>
            <person name="Fujimori K."/>
            <person name="Tanai H."/>
            <person name="Kimata M."/>
            <person name="Watanabe M."/>
            <person name="Hiraoka S."/>
            <person name="Chiba Y."/>
            <person name="Ishida S."/>
            <person name="Ono Y."/>
            <person name="Takiguchi S."/>
            <person name="Watanabe S."/>
            <person name="Yosida M."/>
            <person name="Hotuta T."/>
            <person name="Kusano J."/>
            <person name="Kanehori K."/>
            <person name="Takahashi-Fujii A."/>
            <person name="Hara H."/>
            <person name="Tanase T.-O."/>
            <person name="Nomura Y."/>
            <person name="Togiya S."/>
            <person name="Komai F."/>
            <person name="Hara R."/>
            <person name="Takeuchi K."/>
            <person name="Arita M."/>
            <person name="Imose N."/>
            <person name="Musashino K."/>
            <person name="Yuuki H."/>
            <person name="Oshima A."/>
            <person name="Sasaki N."/>
            <person name="Aotsuka S."/>
            <person name="Yoshikawa Y."/>
            <person name="Matsunawa H."/>
            <person name="Ichihara T."/>
            <person name="Shiohata N."/>
            <person name="Sano S."/>
            <person name="Moriya S."/>
            <person name="Momiyama H."/>
            <person name="Satoh N."/>
            <person name="Takami S."/>
            <person name="Terashima Y."/>
            <person name="Suzuki O."/>
            <person name="Nakagawa S."/>
            <person name="Senoh A."/>
            <person name="Mizoguchi H."/>
            <person name="Goto Y."/>
            <person name="Shimizu F."/>
            <person name="Wakebe H."/>
            <person name="Hishigaki H."/>
            <person name="Watanabe T."/>
            <person name="Sugiyama A."/>
            <person name="Takemoto M."/>
            <person name="Kawakami B."/>
            <person name="Yamazaki M."/>
            <person name="Watanabe K."/>
            <person name="Kumagai A."/>
            <person name="Itakura S."/>
            <person name="Fukuzumi Y."/>
            <person name="Fujimori Y."/>
            <person name="Komiyama M."/>
            <person name="Tashiro H."/>
            <person name="Tanigami A."/>
            <person name="Fujiwara T."/>
            <person name="Ono T."/>
            <person name="Yamada K."/>
            <person name="Fujii Y."/>
            <person name="Ozaki K."/>
            <person name="Hirao M."/>
            <person name="Ohmori Y."/>
            <person name="Kawabata A."/>
            <person name="Hikiji T."/>
            <person name="Kobatake N."/>
            <person name="Inagaki H."/>
            <person name="Ikema Y."/>
            <person name="Okamoto S."/>
            <person name="Okitani R."/>
            <person name="Kawakami T."/>
            <person name="Noguchi S."/>
            <person name="Itoh T."/>
            <person name="Shigeta K."/>
            <person name="Senba T."/>
            <person name="Matsumura K."/>
            <person name="Nakajima Y."/>
            <person name="Mizuno T."/>
            <person name="Morinaga M."/>
            <person name="Sasaki M."/>
            <person name="Togashi T."/>
            <person name="Oyama M."/>
            <person name="Hata H."/>
            <person name="Watanabe M."/>
            <person name="Komatsu T."/>
            <person name="Mizushima-Sugano J."/>
            <person name="Satoh T."/>
            <person name="Shirai Y."/>
            <person name="Takahashi Y."/>
            <person name="Nakagawa K."/>
            <person name="Okumura K."/>
            <person name="Nagase T."/>
            <person name="Nomura N."/>
            <person name="Kikuchi H."/>
            <person name="Masuho Y."/>
            <person name="Yamashita R."/>
            <person name="Nakai K."/>
            <person name="Yada T."/>
            <person name="Nakamura Y."/>
            <person name="Ohara O."/>
            <person name="Isogai T."/>
            <person name="Sugano S."/>
        </authorList>
    </citation>
    <scope>NUCLEOTIDE SEQUENCE [LARGE SCALE MRNA] (ISOFORM 2)</scope>
</reference>
<reference key="6">
    <citation type="journal article" date="2003" name="Nature">
        <title>The DNA sequence and analysis of human chromosome 14.</title>
        <authorList>
            <person name="Heilig R."/>
            <person name="Eckenberg R."/>
            <person name="Petit J.-L."/>
            <person name="Fonknechten N."/>
            <person name="Da Silva C."/>
            <person name="Cattolico L."/>
            <person name="Levy M."/>
            <person name="Barbe V."/>
            <person name="De Berardinis V."/>
            <person name="Ureta-Vidal A."/>
            <person name="Pelletier E."/>
            <person name="Vico V."/>
            <person name="Anthouard V."/>
            <person name="Rowen L."/>
            <person name="Madan A."/>
            <person name="Qin S."/>
            <person name="Sun H."/>
            <person name="Du H."/>
            <person name="Pepin K."/>
            <person name="Artiguenave F."/>
            <person name="Robert C."/>
            <person name="Cruaud C."/>
            <person name="Bruels T."/>
            <person name="Jaillon O."/>
            <person name="Friedlander L."/>
            <person name="Samson G."/>
            <person name="Brottier P."/>
            <person name="Cure S."/>
            <person name="Segurens B."/>
            <person name="Aniere F."/>
            <person name="Samain S."/>
            <person name="Crespeau H."/>
            <person name="Abbasi N."/>
            <person name="Aiach N."/>
            <person name="Boscus D."/>
            <person name="Dickhoff R."/>
            <person name="Dors M."/>
            <person name="Dubois I."/>
            <person name="Friedman C."/>
            <person name="Gouyvenoux M."/>
            <person name="James R."/>
            <person name="Madan A."/>
            <person name="Mairey-Estrada B."/>
            <person name="Mangenot S."/>
            <person name="Martins N."/>
            <person name="Menard M."/>
            <person name="Oztas S."/>
            <person name="Ratcliffe A."/>
            <person name="Shaffer T."/>
            <person name="Trask B."/>
            <person name="Vacherie B."/>
            <person name="Bellemere C."/>
            <person name="Belser C."/>
            <person name="Besnard-Gonnet M."/>
            <person name="Bartol-Mavel D."/>
            <person name="Boutard M."/>
            <person name="Briez-Silla S."/>
            <person name="Combette S."/>
            <person name="Dufosse-Laurent V."/>
            <person name="Ferron C."/>
            <person name="Lechaplais C."/>
            <person name="Louesse C."/>
            <person name="Muselet D."/>
            <person name="Magdelenat G."/>
            <person name="Pateau E."/>
            <person name="Petit E."/>
            <person name="Sirvain-Trukniewicz P."/>
            <person name="Trybou A."/>
            <person name="Vega-Czarny N."/>
            <person name="Bataille E."/>
            <person name="Bluet E."/>
            <person name="Bordelais I."/>
            <person name="Dubois M."/>
            <person name="Dumont C."/>
            <person name="Guerin T."/>
            <person name="Haffray S."/>
            <person name="Hammadi R."/>
            <person name="Muanga J."/>
            <person name="Pellouin V."/>
            <person name="Robert D."/>
            <person name="Wunderle E."/>
            <person name="Gauguet G."/>
            <person name="Roy A."/>
            <person name="Sainte-Marthe L."/>
            <person name="Verdier J."/>
            <person name="Verdier-Discala C."/>
            <person name="Hillier L.W."/>
            <person name="Fulton L."/>
            <person name="McPherson J."/>
            <person name="Matsuda F."/>
            <person name="Wilson R."/>
            <person name="Scarpelli C."/>
            <person name="Gyapay G."/>
            <person name="Wincker P."/>
            <person name="Saurin W."/>
            <person name="Quetier F."/>
            <person name="Waterston R."/>
            <person name="Hood L."/>
            <person name="Weissenbach J."/>
        </authorList>
    </citation>
    <scope>NUCLEOTIDE SEQUENCE [LARGE SCALE GENOMIC DNA]</scope>
</reference>
<reference key="7">
    <citation type="journal article" date="2004" name="Genome Res.">
        <title>The status, quality, and expansion of the NIH full-length cDNA project: the Mammalian Gene Collection (MGC).</title>
        <authorList>
            <consortium name="The MGC Project Team"/>
        </authorList>
    </citation>
    <scope>NUCLEOTIDE SEQUENCE [LARGE SCALE MRNA] (ISOFORMS 1 AND 3)</scope>
    <source>
        <tissue>Embryonic stem cell</tissue>
    </source>
</reference>
<reference key="8">
    <citation type="journal article" date="2000" name="J. Biol. Chem.">
        <title>Identification and cloning of two histone fold motif-containing subunits of HeLa DNA polymerase epsilon.</title>
        <authorList>
            <person name="Li Y."/>
            <person name="Pursell Z.F."/>
            <person name="Linn S."/>
        </authorList>
    </citation>
    <scope>FUNCTION</scope>
    <scope>IDENTIFICATION IN EPSILON DNA POLYMERASE COMPLEX</scope>
    <source>
        <tissue>Cervix carcinoma</tissue>
    </source>
</reference>
<reference evidence="8" key="9">
    <citation type="journal article" date="2021" name="EMBO J.">
        <title>Structure of a human replisome shows the organisation and interactions of a DNA replication machine.</title>
        <authorList>
            <person name="Jones M.L."/>
            <person name="Baris Y."/>
            <person name="Taylor M.R.G."/>
            <person name="Yeeles J.T.P."/>
        </authorList>
    </citation>
    <scope>STRUCTURE BY ELECTRON MICROSCOPY (3.20 ANGSTROMS) IN COMPLEX WITH REPLISOME</scope>
</reference>
<reference evidence="9" key="10">
    <citation type="journal article" date="2021" name="Nature">
        <title>A conserved mechanism for regulating replisome disassembly in eukaryotes.</title>
        <authorList>
            <person name="Jenkyn-Bedford M."/>
            <person name="Jones M.L."/>
            <person name="Baris Y."/>
            <person name="Labib K.P.M."/>
            <person name="Cannone G."/>
            <person name="Yeeles J.T.P."/>
            <person name="Deegan T.D."/>
        </authorList>
    </citation>
    <scope>STRUCTURE BY ELECTRON MICROSCOPY (2.80 ANGSTROMS) IN COMPLEX WITH REPLISOME</scope>
</reference>
<name>DPOE2_HUMAN</name>